<reference key="1">
    <citation type="journal article" date="2005" name="Proc. Natl. Acad. Sci. U.S.A.">
        <title>Comparison of the complete genome sequences of Pseudomonas syringae pv. syringae B728a and pv. tomato DC3000.</title>
        <authorList>
            <person name="Feil H."/>
            <person name="Feil W.S."/>
            <person name="Chain P."/>
            <person name="Larimer F."/>
            <person name="Dibartolo G."/>
            <person name="Copeland A."/>
            <person name="Lykidis A."/>
            <person name="Trong S."/>
            <person name="Nolan M."/>
            <person name="Goltsman E."/>
            <person name="Thiel J."/>
            <person name="Malfatti S."/>
            <person name="Loper J.E."/>
            <person name="Lapidus A."/>
            <person name="Detter J.C."/>
            <person name="Land M."/>
            <person name="Richardson P.M."/>
            <person name="Kyrpides N.C."/>
            <person name="Ivanova N."/>
            <person name="Lindow S.E."/>
        </authorList>
    </citation>
    <scope>NUCLEOTIDE SEQUENCE [LARGE SCALE GENOMIC DNA]</scope>
    <source>
        <strain>B728a</strain>
    </source>
</reference>
<name>DAPE_PSEU2</name>
<comment type="function">
    <text evidence="1">Catalyzes the hydrolysis of N-succinyl-L,L-diaminopimelic acid (SDAP), forming succinate and LL-2,6-diaminopimelate (DAP), an intermediate involved in the bacterial biosynthesis of lysine and meso-diaminopimelic acid, an essential component of bacterial cell walls.</text>
</comment>
<comment type="catalytic activity">
    <reaction evidence="1">
        <text>N-succinyl-(2S,6S)-2,6-diaminopimelate + H2O = (2S,6S)-2,6-diaminopimelate + succinate</text>
        <dbReference type="Rhea" id="RHEA:22608"/>
        <dbReference type="ChEBI" id="CHEBI:15377"/>
        <dbReference type="ChEBI" id="CHEBI:30031"/>
        <dbReference type="ChEBI" id="CHEBI:57609"/>
        <dbReference type="ChEBI" id="CHEBI:58087"/>
        <dbReference type="EC" id="3.5.1.18"/>
    </reaction>
</comment>
<comment type="cofactor">
    <cofactor evidence="1">
        <name>Zn(2+)</name>
        <dbReference type="ChEBI" id="CHEBI:29105"/>
    </cofactor>
    <cofactor evidence="1">
        <name>Co(2+)</name>
        <dbReference type="ChEBI" id="CHEBI:48828"/>
    </cofactor>
    <text evidence="1">Binds 2 Zn(2+) or Co(2+) ions per subunit.</text>
</comment>
<comment type="pathway">
    <text evidence="1">Amino-acid biosynthesis; L-lysine biosynthesis via DAP pathway; LL-2,6-diaminopimelate from (S)-tetrahydrodipicolinate (succinylase route): step 3/3.</text>
</comment>
<comment type="subunit">
    <text evidence="1">Homodimer.</text>
</comment>
<comment type="similarity">
    <text evidence="1">Belongs to the peptidase M20A family. DapE subfamily.</text>
</comment>
<accession>Q4ZWU0</accession>
<sequence length="383" mass="41062">MTAPADLSPTLQLACDLIRRPSVTPVDADCQTVMMQRLGDAGFKLEPMRIEDVDNFWATHGTTDGPVLCFAGHTDVVPTGPLQNWQNDPFDALIDEHGMLCGRGAADMKGSLAAMLVAAERFVADHPDHKGSVAFLITSDEEGPAHHGTKAVVERLAARNERLDWCIVGEPSSTTLVGDVVKNGRRGSLGATLTVRGKQGHVAYPHLAKNPIHLAAPALAELAAEHWDHGNDFFPPTSFQISNLNAGTGATNVIPGDLVAVFNFRFSTESTVEGLQQRVADILDRHELDWHVDWALSGLPFLTEPGALLDAVSSSIKSVTGRETKASTSGGTSDGRFIATLGTQVVELGPVNATIHQVNERILASDLDVLTEIYYQTLVKLLA</sequence>
<evidence type="ECO:0000255" key="1">
    <source>
        <dbReference type="HAMAP-Rule" id="MF_01690"/>
    </source>
</evidence>
<dbReference type="EC" id="3.5.1.18" evidence="1"/>
<dbReference type="EMBL" id="CP000075">
    <property type="protein sequence ID" value="AAY36382.1"/>
    <property type="molecule type" value="Genomic_DNA"/>
</dbReference>
<dbReference type="RefSeq" id="WP_003409292.1">
    <property type="nucleotide sequence ID" value="NC_007005.1"/>
</dbReference>
<dbReference type="RefSeq" id="YP_234420.1">
    <property type="nucleotide sequence ID" value="NC_007005.1"/>
</dbReference>
<dbReference type="SMR" id="Q4ZWU0"/>
<dbReference type="STRING" id="205918.Psyr_1331"/>
<dbReference type="KEGG" id="psb:Psyr_1331"/>
<dbReference type="PATRIC" id="fig|205918.7.peg.1364"/>
<dbReference type="eggNOG" id="COG0624">
    <property type="taxonomic scope" value="Bacteria"/>
</dbReference>
<dbReference type="HOGENOM" id="CLU_021802_4_0_6"/>
<dbReference type="OrthoDB" id="9809784at2"/>
<dbReference type="UniPathway" id="UPA00034">
    <property type="reaction ID" value="UER00021"/>
</dbReference>
<dbReference type="Proteomes" id="UP000000426">
    <property type="component" value="Chromosome"/>
</dbReference>
<dbReference type="GO" id="GO:0008777">
    <property type="term" value="F:acetylornithine deacetylase activity"/>
    <property type="evidence" value="ECO:0007669"/>
    <property type="project" value="TreeGrafter"/>
</dbReference>
<dbReference type="GO" id="GO:0050897">
    <property type="term" value="F:cobalt ion binding"/>
    <property type="evidence" value="ECO:0007669"/>
    <property type="project" value="UniProtKB-UniRule"/>
</dbReference>
<dbReference type="GO" id="GO:0009014">
    <property type="term" value="F:succinyl-diaminopimelate desuccinylase activity"/>
    <property type="evidence" value="ECO:0007669"/>
    <property type="project" value="UniProtKB-UniRule"/>
</dbReference>
<dbReference type="GO" id="GO:0008270">
    <property type="term" value="F:zinc ion binding"/>
    <property type="evidence" value="ECO:0007669"/>
    <property type="project" value="UniProtKB-UniRule"/>
</dbReference>
<dbReference type="GO" id="GO:0019877">
    <property type="term" value="P:diaminopimelate biosynthetic process"/>
    <property type="evidence" value="ECO:0007669"/>
    <property type="project" value="UniProtKB-UniRule"/>
</dbReference>
<dbReference type="GO" id="GO:0006526">
    <property type="term" value="P:L-arginine biosynthetic process"/>
    <property type="evidence" value="ECO:0007669"/>
    <property type="project" value="TreeGrafter"/>
</dbReference>
<dbReference type="GO" id="GO:0009089">
    <property type="term" value="P:lysine biosynthetic process via diaminopimelate"/>
    <property type="evidence" value="ECO:0007669"/>
    <property type="project" value="UniProtKB-UniRule"/>
</dbReference>
<dbReference type="CDD" id="cd03891">
    <property type="entry name" value="M20_DapE_proteobac"/>
    <property type="match status" value="1"/>
</dbReference>
<dbReference type="FunFam" id="3.30.70.360:FF:000011">
    <property type="entry name" value="Succinyl-diaminopimelate desuccinylase"/>
    <property type="match status" value="1"/>
</dbReference>
<dbReference type="FunFam" id="3.40.630.10:FF:000005">
    <property type="entry name" value="Succinyl-diaminopimelate desuccinylase"/>
    <property type="match status" value="1"/>
</dbReference>
<dbReference type="Gene3D" id="3.40.630.10">
    <property type="entry name" value="Zn peptidases"/>
    <property type="match status" value="2"/>
</dbReference>
<dbReference type="HAMAP" id="MF_01690">
    <property type="entry name" value="DapE"/>
    <property type="match status" value="1"/>
</dbReference>
<dbReference type="InterPro" id="IPR001261">
    <property type="entry name" value="ArgE/DapE_CS"/>
</dbReference>
<dbReference type="InterPro" id="IPR036264">
    <property type="entry name" value="Bact_exopeptidase_dim_dom"/>
</dbReference>
<dbReference type="InterPro" id="IPR005941">
    <property type="entry name" value="DapE_proteobac"/>
</dbReference>
<dbReference type="InterPro" id="IPR002933">
    <property type="entry name" value="Peptidase_M20"/>
</dbReference>
<dbReference type="InterPro" id="IPR011650">
    <property type="entry name" value="Peptidase_M20_dimer"/>
</dbReference>
<dbReference type="InterPro" id="IPR050072">
    <property type="entry name" value="Peptidase_M20A"/>
</dbReference>
<dbReference type="NCBIfam" id="TIGR01246">
    <property type="entry name" value="dapE_proteo"/>
    <property type="match status" value="1"/>
</dbReference>
<dbReference type="NCBIfam" id="NF009557">
    <property type="entry name" value="PRK13009.1"/>
    <property type="match status" value="1"/>
</dbReference>
<dbReference type="PANTHER" id="PTHR43808">
    <property type="entry name" value="ACETYLORNITHINE DEACETYLASE"/>
    <property type="match status" value="1"/>
</dbReference>
<dbReference type="PANTHER" id="PTHR43808:SF31">
    <property type="entry name" value="N-ACETYL-L-CITRULLINE DEACETYLASE"/>
    <property type="match status" value="1"/>
</dbReference>
<dbReference type="Pfam" id="PF07687">
    <property type="entry name" value="M20_dimer"/>
    <property type="match status" value="1"/>
</dbReference>
<dbReference type="Pfam" id="PF01546">
    <property type="entry name" value="Peptidase_M20"/>
    <property type="match status" value="1"/>
</dbReference>
<dbReference type="SUPFAM" id="SSF55031">
    <property type="entry name" value="Bacterial exopeptidase dimerisation domain"/>
    <property type="match status" value="1"/>
</dbReference>
<dbReference type="SUPFAM" id="SSF53187">
    <property type="entry name" value="Zn-dependent exopeptidases"/>
    <property type="match status" value="1"/>
</dbReference>
<dbReference type="PROSITE" id="PS00759">
    <property type="entry name" value="ARGE_DAPE_CPG2_2"/>
    <property type="match status" value="1"/>
</dbReference>
<feature type="chain" id="PRO_0000375668" description="Succinyl-diaminopimelate desuccinylase">
    <location>
        <begin position="1"/>
        <end position="383"/>
    </location>
</feature>
<feature type="active site" evidence="1">
    <location>
        <position position="75"/>
    </location>
</feature>
<feature type="active site" description="Proton acceptor" evidence="1">
    <location>
        <position position="141"/>
    </location>
</feature>
<feature type="binding site" evidence="1">
    <location>
        <position position="73"/>
    </location>
    <ligand>
        <name>Zn(2+)</name>
        <dbReference type="ChEBI" id="CHEBI:29105"/>
        <label>1</label>
    </ligand>
</feature>
<feature type="binding site" evidence="1">
    <location>
        <position position="107"/>
    </location>
    <ligand>
        <name>Zn(2+)</name>
        <dbReference type="ChEBI" id="CHEBI:29105"/>
        <label>1</label>
    </ligand>
</feature>
<feature type="binding site" evidence="1">
    <location>
        <position position="107"/>
    </location>
    <ligand>
        <name>Zn(2+)</name>
        <dbReference type="ChEBI" id="CHEBI:29105"/>
        <label>2</label>
    </ligand>
</feature>
<feature type="binding site" evidence="1">
    <location>
        <position position="142"/>
    </location>
    <ligand>
        <name>Zn(2+)</name>
        <dbReference type="ChEBI" id="CHEBI:29105"/>
        <label>2</label>
    </ligand>
</feature>
<feature type="binding site" evidence="1">
    <location>
        <position position="170"/>
    </location>
    <ligand>
        <name>Zn(2+)</name>
        <dbReference type="ChEBI" id="CHEBI:29105"/>
        <label>1</label>
    </ligand>
</feature>
<feature type="binding site" evidence="1">
    <location>
        <position position="356"/>
    </location>
    <ligand>
        <name>Zn(2+)</name>
        <dbReference type="ChEBI" id="CHEBI:29105"/>
        <label>2</label>
    </ligand>
</feature>
<keyword id="KW-0028">Amino-acid biosynthesis</keyword>
<keyword id="KW-0170">Cobalt</keyword>
<keyword id="KW-0220">Diaminopimelate biosynthesis</keyword>
<keyword id="KW-0378">Hydrolase</keyword>
<keyword id="KW-0457">Lysine biosynthesis</keyword>
<keyword id="KW-0479">Metal-binding</keyword>
<keyword id="KW-0862">Zinc</keyword>
<protein>
    <recommendedName>
        <fullName evidence="1">Succinyl-diaminopimelate desuccinylase</fullName>
        <shortName evidence="1">SDAP desuccinylase</shortName>
        <ecNumber evidence="1">3.5.1.18</ecNumber>
    </recommendedName>
    <alternativeName>
        <fullName evidence="1">N-succinyl-LL-2,6-diaminoheptanedioate amidohydrolase</fullName>
    </alternativeName>
</protein>
<organism>
    <name type="scientific">Pseudomonas syringae pv. syringae (strain B728a)</name>
    <dbReference type="NCBI Taxonomy" id="205918"/>
    <lineage>
        <taxon>Bacteria</taxon>
        <taxon>Pseudomonadati</taxon>
        <taxon>Pseudomonadota</taxon>
        <taxon>Gammaproteobacteria</taxon>
        <taxon>Pseudomonadales</taxon>
        <taxon>Pseudomonadaceae</taxon>
        <taxon>Pseudomonas</taxon>
        <taxon>Pseudomonas syringae</taxon>
    </lineage>
</organism>
<proteinExistence type="inferred from homology"/>
<gene>
    <name evidence="1" type="primary">dapE</name>
    <name type="ordered locus">Psyr_1331</name>
</gene>